<feature type="chain" id="PRO_0000439124" description="Catalase easC">
    <location>
        <begin position="1"/>
        <end position="482"/>
    </location>
</feature>
<feature type="active site" evidence="1">
    <location>
        <position position="58"/>
    </location>
</feature>
<feature type="binding site" description="axial binding residue" evidence="1">
    <location>
        <position position="347"/>
    </location>
    <ligand>
        <name>heme</name>
        <dbReference type="ChEBI" id="CHEBI:30413"/>
    </ligand>
    <ligandPart>
        <name>Fe</name>
        <dbReference type="ChEBI" id="CHEBI:18248"/>
    </ligandPart>
</feature>
<organism>
    <name type="scientific">Arthroderma otae (strain ATCC MYA-4605 / CBS 113480)</name>
    <name type="common">Microsporum canis</name>
    <dbReference type="NCBI Taxonomy" id="554155"/>
    <lineage>
        <taxon>Eukaryota</taxon>
        <taxon>Fungi</taxon>
        <taxon>Dikarya</taxon>
        <taxon>Ascomycota</taxon>
        <taxon>Pezizomycotina</taxon>
        <taxon>Eurotiomycetes</taxon>
        <taxon>Eurotiomycetidae</taxon>
        <taxon>Onygenales</taxon>
        <taxon>Arthrodermataceae</taxon>
        <taxon>Microsporum</taxon>
    </lineage>
</organism>
<accession>C5FTM9</accession>
<name>EASC_ARTOC</name>
<dbReference type="EC" id="1.11.-.-" evidence="5"/>
<dbReference type="EMBL" id="DS995705">
    <property type="protein sequence ID" value="EEQ33232.1"/>
    <property type="molecule type" value="Genomic_DNA"/>
</dbReference>
<dbReference type="RefSeq" id="XP_002846182.1">
    <property type="nucleotide sequence ID" value="XM_002846136.1"/>
</dbReference>
<dbReference type="SMR" id="C5FTM9"/>
<dbReference type="STRING" id="554155.C5FTM9"/>
<dbReference type="GeneID" id="9227064"/>
<dbReference type="VEuPathDB" id="FungiDB:MCYG_06051"/>
<dbReference type="eggNOG" id="KOG0047">
    <property type="taxonomic scope" value="Eukaryota"/>
</dbReference>
<dbReference type="HOGENOM" id="CLU_010645_2_0_1"/>
<dbReference type="OMA" id="GSFKYVH"/>
<dbReference type="OrthoDB" id="6880011at2759"/>
<dbReference type="UniPathway" id="UPA00327"/>
<dbReference type="Proteomes" id="UP000002035">
    <property type="component" value="Unassembled WGS sequence"/>
</dbReference>
<dbReference type="GO" id="GO:0005739">
    <property type="term" value="C:mitochondrion"/>
    <property type="evidence" value="ECO:0007669"/>
    <property type="project" value="TreeGrafter"/>
</dbReference>
<dbReference type="GO" id="GO:0005777">
    <property type="term" value="C:peroxisome"/>
    <property type="evidence" value="ECO:0007669"/>
    <property type="project" value="TreeGrafter"/>
</dbReference>
<dbReference type="GO" id="GO:0004096">
    <property type="term" value="F:catalase activity"/>
    <property type="evidence" value="ECO:0007669"/>
    <property type="project" value="InterPro"/>
</dbReference>
<dbReference type="GO" id="GO:0020037">
    <property type="term" value="F:heme binding"/>
    <property type="evidence" value="ECO:0007669"/>
    <property type="project" value="InterPro"/>
</dbReference>
<dbReference type="GO" id="GO:0046872">
    <property type="term" value="F:metal ion binding"/>
    <property type="evidence" value="ECO:0007669"/>
    <property type="project" value="UniProtKB-KW"/>
</dbReference>
<dbReference type="GO" id="GO:0042744">
    <property type="term" value="P:hydrogen peroxide catabolic process"/>
    <property type="evidence" value="ECO:0007669"/>
    <property type="project" value="UniProtKB-KW"/>
</dbReference>
<dbReference type="GO" id="GO:0035835">
    <property type="term" value="P:indole alkaloid biosynthetic process"/>
    <property type="evidence" value="ECO:0007669"/>
    <property type="project" value="UniProtKB-UniPathway"/>
</dbReference>
<dbReference type="GO" id="GO:0042542">
    <property type="term" value="P:response to hydrogen peroxide"/>
    <property type="evidence" value="ECO:0007669"/>
    <property type="project" value="TreeGrafter"/>
</dbReference>
<dbReference type="CDD" id="cd08157">
    <property type="entry name" value="catalase_fungal"/>
    <property type="match status" value="1"/>
</dbReference>
<dbReference type="Gene3D" id="2.40.180.10">
    <property type="entry name" value="Catalase core domain"/>
    <property type="match status" value="1"/>
</dbReference>
<dbReference type="InterPro" id="IPR018028">
    <property type="entry name" value="Catalase"/>
</dbReference>
<dbReference type="InterPro" id="IPR024708">
    <property type="entry name" value="Catalase_AS"/>
</dbReference>
<dbReference type="InterPro" id="IPR024711">
    <property type="entry name" value="Catalase_clade1/3"/>
</dbReference>
<dbReference type="InterPro" id="IPR011614">
    <property type="entry name" value="Catalase_core"/>
</dbReference>
<dbReference type="InterPro" id="IPR002226">
    <property type="entry name" value="Catalase_haem_BS"/>
</dbReference>
<dbReference type="InterPro" id="IPR020835">
    <property type="entry name" value="Catalase_sf"/>
</dbReference>
<dbReference type="PANTHER" id="PTHR11465">
    <property type="entry name" value="CATALASE"/>
    <property type="match status" value="1"/>
</dbReference>
<dbReference type="PANTHER" id="PTHR11465:SF9">
    <property type="entry name" value="CATALASE"/>
    <property type="match status" value="1"/>
</dbReference>
<dbReference type="Pfam" id="PF00199">
    <property type="entry name" value="Catalase"/>
    <property type="match status" value="1"/>
</dbReference>
<dbReference type="PIRSF" id="PIRSF038928">
    <property type="entry name" value="Catalase_clade1-3"/>
    <property type="match status" value="1"/>
</dbReference>
<dbReference type="PRINTS" id="PR00067">
    <property type="entry name" value="CATALASE"/>
</dbReference>
<dbReference type="SMART" id="SM01060">
    <property type="entry name" value="Catalase"/>
    <property type="match status" value="1"/>
</dbReference>
<dbReference type="SUPFAM" id="SSF56634">
    <property type="entry name" value="Heme-dependent catalase-like"/>
    <property type="match status" value="1"/>
</dbReference>
<dbReference type="PROSITE" id="PS00437">
    <property type="entry name" value="CATALASE_1"/>
    <property type="match status" value="1"/>
</dbReference>
<dbReference type="PROSITE" id="PS00438">
    <property type="entry name" value="CATALASE_2"/>
    <property type="match status" value="1"/>
</dbReference>
<dbReference type="PROSITE" id="PS51402">
    <property type="entry name" value="CATALASE_3"/>
    <property type="match status" value="1"/>
</dbReference>
<sequence length="482" mass="54898">MAPNAADKCPVMNNAAEKCPVMHSNGVSSIQSHGPRDIYTLEALSHFNREKIPERAVHAKGTGAYGEFEVTADISDICNVDMLLGVGKKTQCVTRFSTTGLERGSSDGVRDLKGMAVKFFTEQGDWDWVSLNFPFFFIRDPAKFPDMIHSQRRDPQTNLLNPSMTWDFVTKNPEALHMTLLQHSDFGTMFTWRTLSSYAGHAFKWVMPDGSFKYVHFFLASDRGPNFTDGSTAKIDPNDPDFATKDLFEAIERGDYPTWTANVQVIDPKDAPKLGFNILDITKHWNLGTYPKGLDTIPSRPFGKLTLNRNVKDYFTEVEKLAFSPSNLVPGVEPSEDPILQARMFAYPDAQRYRLGIDHLKAPIRRKETSCKHDLGPEFDQWLSQVTSESWSHPHEDDYKFAREYYEVLPEFRSQEFQDRMVENLYKSVAQGPEDLRKRVYETFELVSTELARRVREGAEVIVADMAQPDSPERAQPGQQRL</sequence>
<protein>
    <recommendedName>
        <fullName evidence="3">Catalase easC</fullName>
        <ecNumber evidence="5">1.11.-.-</ecNumber>
    </recommendedName>
    <alternativeName>
        <fullName evidence="3">Ergot alkaloid synthesis protein C</fullName>
    </alternativeName>
</protein>
<keyword id="KW-0017">Alkaloid metabolism</keyword>
<keyword id="KW-0349">Heme</keyword>
<keyword id="KW-0376">Hydrogen peroxide</keyword>
<keyword id="KW-0408">Iron</keyword>
<keyword id="KW-0479">Metal-binding</keyword>
<keyword id="KW-0560">Oxidoreductase</keyword>
<keyword id="KW-0575">Peroxidase</keyword>
<keyword id="KW-1185">Reference proteome</keyword>
<comment type="function">
    <text evidence="2">Catalase; part of the gene cluster that mediates the biosynthesis of fungal ergot alkaloid (PubMed:22403186). DmaW catalyzes the first step of ergot alkaloid biosynthesis by condensing dimethylallyl diphosphate (DMAP) and tryptophan to form 4-dimethylallyl-L-tryptophan (PubMed:22403186). The second step is catalyzed by the methyltransferase easF that methylates 4-dimethylallyl-L-tryptophan in the presence of S-adenosyl-L-methionine, resulting in the formation of 4-dimethylallyl-L-abrine (PubMed:22403186). The catalase easC and the FAD-dependent oxidoreductase easE then transform 4-dimethylallyl-L-abrine to chanoclavine-I which is further oxidized by easD in the presence of NAD(+), resulting in the formation of chanoclavine-I aldehyde (PubMed:22403186). Chanoclavine-I aldehyde is the precursor of ergoamides and ergopeptines in Clavicipitaceae, and clavine-type alcaloids such as fumiclavine in Trichocomaceae (PubMed:22403186). However, the metabolites downstream of chanoclavine-I aldehyde in Arthrodermataceae have not been identified yet (PubMed:22403186).</text>
</comment>
<comment type="cofactor">
    <cofactor evidence="1">
        <name>heme</name>
        <dbReference type="ChEBI" id="CHEBI:30413"/>
    </cofactor>
</comment>
<comment type="pathway">
    <text evidence="5">Alkaloid biosynthesis; ergot alkaloid biosynthesis.</text>
</comment>
<comment type="similarity">
    <text evidence="4">Belongs to the catalase family.</text>
</comment>
<reference key="1">
    <citation type="journal article" date="2012" name="MBio">
        <title>Comparative genome analysis of Trichophyton rubrum and related dermatophytes reveals candidate genes involved in infection.</title>
        <authorList>
            <person name="Martinez D.A."/>
            <person name="Oliver B.G."/>
            <person name="Graeser Y."/>
            <person name="Goldberg J.M."/>
            <person name="Li W."/>
            <person name="Martinez-Rossi N.M."/>
            <person name="Monod M."/>
            <person name="Shelest E."/>
            <person name="Barton R.C."/>
            <person name="Birch E."/>
            <person name="Brakhage A.A."/>
            <person name="Chen Z."/>
            <person name="Gurr S.J."/>
            <person name="Heiman D."/>
            <person name="Heitman J."/>
            <person name="Kosti I."/>
            <person name="Rossi A."/>
            <person name="Saif S."/>
            <person name="Samalova M."/>
            <person name="Saunders C.W."/>
            <person name="Shea T."/>
            <person name="Summerbell R.C."/>
            <person name="Xu J."/>
            <person name="Young S."/>
            <person name="Zeng Q."/>
            <person name="Birren B.W."/>
            <person name="Cuomo C.A."/>
            <person name="White T.C."/>
        </authorList>
    </citation>
    <scope>NUCLEOTIDE SEQUENCE [LARGE SCALE GENOMIC DNA]</scope>
    <source>
        <strain>ATCC MYA-4605 / CBS 113480</strain>
    </source>
</reference>
<reference key="2">
    <citation type="journal article" date="2012" name="Microbiology">
        <title>Genome mining reveals the presence of a conserved gene cluster for the biosynthesis of ergot alkaloid precursors in the fungal family Arthrodermataceae.</title>
        <authorList>
            <person name="Wallwey C."/>
            <person name="Heddergott C."/>
            <person name="Xie X."/>
            <person name="Brakhage A.A."/>
            <person name="Li S.M."/>
        </authorList>
    </citation>
    <scope>FUNCTION</scope>
</reference>
<proteinExistence type="inferred from homology"/>
<evidence type="ECO:0000250" key="1">
    <source>
        <dbReference type="UniProtKB" id="P15202"/>
    </source>
</evidence>
<evidence type="ECO:0000269" key="2">
    <source>
    </source>
</evidence>
<evidence type="ECO:0000303" key="3">
    <source>
    </source>
</evidence>
<evidence type="ECO:0000305" key="4"/>
<evidence type="ECO:0000305" key="5">
    <source>
    </source>
</evidence>
<gene>
    <name evidence="3" type="primary">easC</name>
    <name type="ORF">MCYG_06051</name>
</gene>